<feature type="chain" id="PRO_0000078934" description="Non-structural protein 1">
    <location>
        <begin position="1"/>
        <end position="230"/>
    </location>
</feature>
<feature type="region of interest" description="RNA-binding and homodimerization" evidence="1">
    <location>
        <begin position="1"/>
        <end position="73"/>
    </location>
</feature>
<feature type="region of interest" description="CPSF4-binding" evidence="1">
    <location>
        <begin position="180"/>
        <end position="215"/>
    </location>
</feature>
<feature type="region of interest" description="Disordered" evidence="2">
    <location>
        <begin position="205"/>
        <end position="230"/>
    </location>
</feature>
<feature type="region of interest" description="PABPN1-binding" evidence="1">
    <location>
        <begin position="223"/>
        <end position="230"/>
    </location>
</feature>
<feature type="short sequence motif" description="Nuclear localization signal" evidence="1">
    <location>
        <begin position="34"/>
        <end position="38"/>
    </location>
</feature>
<feature type="short sequence motif" description="Nuclear export signal" evidence="1">
    <location>
        <begin position="137"/>
        <end position="146"/>
    </location>
</feature>
<feature type="compositionally biased region" description="Basic residues" evidence="2">
    <location>
        <begin position="217"/>
        <end position="230"/>
    </location>
</feature>
<accession>P69274</accession>
<accession>P26131</accession>
<comment type="function">
    <text evidence="1">Inhibits post-transcriptional processing of cellular pre-mRNA, by binding and inhibiting two cellular proteins that are required for the 3'-end processing of cellular pre-mRNAs: the 30 kDa cleavage and polyadenylation specificity factor/CPSF4 and the poly(A)-binding protein 2/PABPN1. In turn, unprocessed 3' end pre-mRNAs accumulate in the host nucleus and are no longer exported to the cytoplasm. Cellular protein synthesis is thereby shut off very early after virus infection. Viral protein synthesis is not affected by the inhibition of the cellular 3' end processing machinery because the poly(A) tails of viral mRNAs are produced by the viral polymerase through a stuttering mechanism. Prevents the establishment of the cellular antiviral state by inhibiting TRIM25-mediated RIGI ubiquitination, which normally triggers the antiviral transduction signal that leads to the activation of type I IFN genes by transcription factors IRF3 and IRF7. Also binds poly(A) and U6 snRNA. Inhibits the integrated stress response (ISR) in the infected cell by blocking dsRNA binding by EIF2AK2/PKR and further phosphorylation of EIF2S1/EIF-2ALPHA. Stress granule formation is thus inhibited, which allows protein synthesis and viral replication.</text>
</comment>
<comment type="subunit">
    <text evidence="1">Homodimer. Interacts with host TRIM25 (via coiled coil); this interaction specifically inhibits TRIM25 multimerization and TRIM25-mediated RIGI CARD ubiquitination. Interacts with human EIF2AK2/PKR, CPSF4, IVNS1ABP and PABPN1.</text>
</comment>
<comment type="subcellular location">
    <subcellularLocation>
        <location evidence="1">Host nucleus</location>
    </subcellularLocation>
    <subcellularLocation>
        <location evidence="1">Host cytoplasm</location>
    </subcellularLocation>
    <text evidence="1">In uninfected, transfected cells, NS1 is localized in the nucleus. Only in virus infected cells, the nuclear export signal is unveiled, presumably by a viral protein, and a fraction of NS1 is exported in the cytoplasm.</text>
</comment>
<comment type="alternative products">
    <event type="alternative splicing"/>
    <isoform>
        <id>P69274-1</id>
        <name>NS1</name>
        <sequence type="displayed"/>
    </isoform>
    <isoform>
        <id>P69267-1</id>
        <name>NEP</name>
        <name>NS2</name>
        <sequence type="external"/>
    </isoform>
</comment>
<comment type="domain">
    <text evidence="1">The dsRNA-binding region is required for suppression of RNA silencing.</text>
</comment>
<comment type="PTM">
    <text evidence="1">Upon interferon induction, ISGylated via host HERC5; this results in the impairment of NS1 interaction with RNA targets due to its inability to form homodimers and to interact with host EIF2AK2/PKR.</text>
</comment>
<comment type="similarity">
    <text evidence="1">Belongs to the influenza A viruses NS1 family.</text>
</comment>
<dbReference type="EMBL" id="M81584">
    <property type="protein sequence ID" value="AAA19203.1"/>
    <property type="status" value="ALT_TERM"/>
    <property type="molecule type" value="Unassigned_RNA"/>
</dbReference>
<dbReference type="SMR" id="P69274"/>
<dbReference type="GO" id="GO:0030430">
    <property type="term" value="C:host cell cytoplasm"/>
    <property type="evidence" value="ECO:0007669"/>
    <property type="project" value="UniProtKB-SubCell"/>
</dbReference>
<dbReference type="GO" id="GO:0042025">
    <property type="term" value="C:host cell nucleus"/>
    <property type="evidence" value="ECO:0007669"/>
    <property type="project" value="UniProtKB-SubCell"/>
</dbReference>
<dbReference type="GO" id="GO:0030291">
    <property type="term" value="F:protein serine/threonine kinase inhibitor activity"/>
    <property type="evidence" value="ECO:0007669"/>
    <property type="project" value="UniProtKB-KW"/>
</dbReference>
<dbReference type="GO" id="GO:0003723">
    <property type="term" value="F:RNA binding"/>
    <property type="evidence" value="ECO:0007669"/>
    <property type="project" value="UniProtKB-KW"/>
</dbReference>
<dbReference type="GO" id="GO:0039540">
    <property type="term" value="P:symbiont-mediated suppression of host cytoplasmic pattern recognition receptor signaling pathway via inhibition of RIG-I activity"/>
    <property type="evidence" value="ECO:0007669"/>
    <property type="project" value="UniProtKB-KW"/>
</dbReference>
<dbReference type="GO" id="GO:0039657">
    <property type="term" value="P:symbiont-mediated suppression of host gene expression"/>
    <property type="evidence" value="ECO:0007669"/>
    <property type="project" value="UniProtKB-KW"/>
</dbReference>
<dbReference type="GO" id="GO:0039524">
    <property type="term" value="P:symbiont-mediated suppression of host mRNA processing"/>
    <property type="evidence" value="ECO:0007669"/>
    <property type="project" value="UniProtKB-KW"/>
</dbReference>
<dbReference type="GO" id="GO:0039580">
    <property type="term" value="P:symbiont-mediated suppression of host PKR/eIFalpha signaling"/>
    <property type="evidence" value="ECO:0007669"/>
    <property type="project" value="UniProtKB-KW"/>
</dbReference>
<dbReference type="GO" id="GO:0039502">
    <property type="term" value="P:symbiont-mediated suppression of host type I interferon-mediated signaling pathway"/>
    <property type="evidence" value="ECO:0007669"/>
    <property type="project" value="UniProtKB-KW"/>
</dbReference>
<dbReference type="FunFam" id="1.10.287.10:FF:000001">
    <property type="entry name" value="Non-structural protein 1"/>
    <property type="match status" value="1"/>
</dbReference>
<dbReference type="FunFam" id="3.30.420.330:FF:000001">
    <property type="entry name" value="Non-structural protein 1"/>
    <property type="match status" value="1"/>
</dbReference>
<dbReference type="Gene3D" id="3.30.420.330">
    <property type="entry name" value="Influenza virus non-structural protein, effector domain"/>
    <property type="match status" value="1"/>
</dbReference>
<dbReference type="Gene3D" id="1.10.287.10">
    <property type="entry name" value="S15/NS1, RNA-binding"/>
    <property type="match status" value="1"/>
</dbReference>
<dbReference type="HAMAP" id="MF_04066">
    <property type="entry name" value="INFV_NS1"/>
    <property type="match status" value="1"/>
</dbReference>
<dbReference type="InterPro" id="IPR004208">
    <property type="entry name" value="NS1"/>
</dbReference>
<dbReference type="InterPro" id="IPR000256">
    <property type="entry name" value="NS1A"/>
</dbReference>
<dbReference type="InterPro" id="IPR038064">
    <property type="entry name" value="NS1A_effect_dom-like_sf"/>
</dbReference>
<dbReference type="InterPro" id="IPR009068">
    <property type="entry name" value="uS15_NS1_RNA-bd_sf"/>
</dbReference>
<dbReference type="Pfam" id="PF00600">
    <property type="entry name" value="Flu_NS1"/>
    <property type="match status" value="1"/>
</dbReference>
<dbReference type="SUPFAM" id="SSF143021">
    <property type="entry name" value="Ns1 effector domain-like"/>
    <property type="match status" value="1"/>
</dbReference>
<dbReference type="SUPFAM" id="SSF47060">
    <property type="entry name" value="S15/NS1 RNA-binding domain"/>
    <property type="match status" value="1"/>
</dbReference>
<keyword id="KW-0025">Alternative splicing</keyword>
<keyword id="KW-1262">Eukaryotic host gene expression shutoff by virus</keyword>
<keyword id="KW-1035">Host cytoplasm</keyword>
<keyword id="KW-1190">Host gene expression shutoff by virus</keyword>
<keyword id="KW-1192">Host mRNA suppression by virus</keyword>
<keyword id="KW-1048">Host nucleus</keyword>
<keyword id="KW-0945">Host-virus interaction</keyword>
<keyword id="KW-1090">Inhibition of host innate immune response by virus</keyword>
<keyword id="KW-1114">Inhibition of host interferon signaling pathway by virus</keyword>
<keyword id="KW-1102">Inhibition of host PKR by virus</keyword>
<keyword id="KW-1103">Inhibition of host pre-mRNA processing by virus</keyword>
<keyword id="KW-1088">Inhibition of host RIG-I by virus</keyword>
<keyword id="KW-1113">Inhibition of host RLR pathway by virus</keyword>
<keyword id="KW-0922">Interferon antiviral system evasion</keyword>
<keyword id="KW-0694">RNA-binding</keyword>
<keyword id="KW-0832">Ubl conjugation</keyword>
<keyword id="KW-0899">Viral immunoevasion</keyword>
<organismHost>
    <name type="scientific">Aves</name>
    <dbReference type="NCBI Taxonomy" id="8782"/>
</organismHost>
<organismHost>
    <name type="scientific">Homo sapiens</name>
    <name type="common">Human</name>
    <dbReference type="NCBI Taxonomy" id="9606"/>
</organismHost>
<evidence type="ECO:0000255" key="1">
    <source>
        <dbReference type="HAMAP-Rule" id="MF_04066"/>
    </source>
</evidence>
<evidence type="ECO:0000256" key="2">
    <source>
        <dbReference type="SAM" id="MobiDB-lite"/>
    </source>
</evidence>
<sequence length="230" mass="26096">MDPNTVSSFQVDCFLWHVRKQVPDQELGDAPFLDRLRRDQKSLRGRGSTLGLNIETATRVGKQIVERILKEESDEALKMTMASAPASRYLTDMTIEEMSRDWFMLMPKQKVAGPLCIRMDQAIMDKNIILKANFSVIFDRLETLILLRAFTEEGAIVGEISPLPSLPGHTNEDVKNAIGVLIGGLEWNDNTVRVSKTLQRFAWRSSNENGRPPLTPKQKRKMARTIRSKV</sequence>
<proteinExistence type="inferred from homology"/>
<name>NS1_I57A3</name>
<organism>
    <name type="scientific">Influenza A virus (strain A/Leningrad/134/47/1957 H2N2)</name>
    <dbReference type="NCBI Taxonomy" id="380983"/>
    <lineage>
        <taxon>Viruses</taxon>
        <taxon>Riboviria</taxon>
        <taxon>Orthornavirae</taxon>
        <taxon>Negarnaviricota</taxon>
        <taxon>Polyploviricotina</taxon>
        <taxon>Insthoviricetes</taxon>
        <taxon>Articulavirales</taxon>
        <taxon>Orthomyxoviridae</taxon>
        <taxon>Alphainfluenzavirus</taxon>
        <taxon>Alphainfluenzavirus influenzae</taxon>
        <taxon>Influenza A virus</taxon>
    </lineage>
</organism>
<gene>
    <name evidence="1" type="primary">NS</name>
</gene>
<protein>
    <recommendedName>
        <fullName evidence="1">Non-structural protein 1</fullName>
        <shortName evidence="1">NS1</shortName>
    </recommendedName>
    <alternativeName>
        <fullName evidence="1">NS1A</fullName>
    </alternativeName>
</protein>
<reference key="1">
    <citation type="journal article" date="1992" name="Virology">
        <title>Sequence changes in the live attenuated, cold-adapted variants of influenza A/Leningrad/134/57 (H2N2) virus.</title>
        <authorList>
            <person name="Klimov A.I."/>
            <person name="Cox N.J."/>
            <person name="Yotov W.V."/>
            <person name="Rocha E."/>
            <person name="Alexandrova G.I."/>
            <person name="Kendal A.P."/>
        </authorList>
    </citation>
    <scope>NUCLEOTIDE SEQUENCE</scope>
</reference>
<reference key="2">
    <citation type="journal article" date="2003" name="Virology">
        <title>Intracellular warfare between human influenza viruses and human cells: the roles of the viral NS1 protein.</title>
        <authorList>
            <person name="Krug R.M."/>
            <person name="Yuan W."/>
            <person name="Noah D.L."/>
            <person name="Latham A.G."/>
        </authorList>
    </citation>
    <scope>REVIEW</scope>
</reference>